<gene>
    <name type="primary">mt-cyb</name>
    <name type="synonym">cob</name>
    <name type="synonym">cytb</name>
    <name type="synonym">mtcyb</name>
</gene>
<keyword id="KW-0249">Electron transport</keyword>
<keyword id="KW-0349">Heme</keyword>
<keyword id="KW-0408">Iron</keyword>
<keyword id="KW-0472">Membrane</keyword>
<keyword id="KW-0479">Metal-binding</keyword>
<keyword id="KW-0496">Mitochondrion</keyword>
<keyword id="KW-0999">Mitochondrion inner membrane</keyword>
<keyword id="KW-0679">Respiratory chain</keyword>
<keyword id="KW-0812">Transmembrane</keyword>
<keyword id="KW-1133">Transmembrane helix</keyword>
<keyword id="KW-0813">Transport</keyword>
<keyword id="KW-0830">Ubiquinone</keyword>
<name>CYB_GALCU</name>
<dbReference type="EMBL" id="L08034">
    <property type="protein sequence ID" value="AAA31766.1"/>
    <property type="molecule type" value="Genomic_DNA"/>
</dbReference>
<dbReference type="SMR" id="P34868"/>
<dbReference type="GO" id="GO:0005743">
    <property type="term" value="C:mitochondrial inner membrane"/>
    <property type="evidence" value="ECO:0007669"/>
    <property type="project" value="UniProtKB-SubCell"/>
</dbReference>
<dbReference type="GO" id="GO:0045275">
    <property type="term" value="C:respiratory chain complex III"/>
    <property type="evidence" value="ECO:0007669"/>
    <property type="project" value="InterPro"/>
</dbReference>
<dbReference type="GO" id="GO:0046872">
    <property type="term" value="F:metal ion binding"/>
    <property type="evidence" value="ECO:0007669"/>
    <property type="project" value="UniProtKB-KW"/>
</dbReference>
<dbReference type="GO" id="GO:0008121">
    <property type="term" value="F:ubiquinol-cytochrome-c reductase activity"/>
    <property type="evidence" value="ECO:0007669"/>
    <property type="project" value="InterPro"/>
</dbReference>
<dbReference type="GO" id="GO:0006122">
    <property type="term" value="P:mitochondrial electron transport, ubiquinol to cytochrome c"/>
    <property type="evidence" value="ECO:0007669"/>
    <property type="project" value="TreeGrafter"/>
</dbReference>
<dbReference type="CDD" id="cd00290">
    <property type="entry name" value="cytochrome_b_C"/>
    <property type="match status" value="1"/>
</dbReference>
<dbReference type="CDD" id="cd00284">
    <property type="entry name" value="Cytochrome_b_N"/>
    <property type="match status" value="1"/>
</dbReference>
<dbReference type="FunFam" id="1.20.810.10:FF:000002">
    <property type="entry name" value="Cytochrome b"/>
    <property type="match status" value="1"/>
</dbReference>
<dbReference type="Gene3D" id="1.20.810.10">
    <property type="entry name" value="Cytochrome Bc1 Complex, Chain C"/>
    <property type="match status" value="1"/>
</dbReference>
<dbReference type="InterPro" id="IPR005798">
    <property type="entry name" value="Cyt_b/b6_C"/>
</dbReference>
<dbReference type="InterPro" id="IPR036150">
    <property type="entry name" value="Cyt_b/b6_C_sf"/>
</dbReference>
<dbReference type="InterPro" id="IPR005797">
    <property type="entry name" value="Cyt_b/b6_N"/>
</dbReference>
<dbReference type="InterPro" id="IPR027387">
    <property type="entry name" value="Cytb/b6-like_sf"/>
</dbReference>
<dbReference type="InterPro" id="IPR030689">
    <property type="entry name" value="Cytochrome_b"/>
</dbReference>
<dbReference type="InterPro" id="IPR048260">
    <property type="entry name" value="Cytochrome_b_C_euk/bac"/>
</dbReference>
<dbReference type="InterPro" id="IPR048259">
    <property type="entry name" value="Cytochrome_b_N_euk/bac"/>
</dbReference>
<dbReference type="InterPro" id="IPR016174">
    <property type="entry name" value="Di-haem_cyt_TM"/>
</dbReference>
<dbReference type="PANTHER" id="PTHR19271">
    <property type="entry name" value="CYTOCHROME B"/>
    <property type="match status" value="1"/>
</dbReference>
<dbReference type="PANTHER" id="PTHR19271:SF16">
    <property type="entry name" value="CYTOCHROME B"/>
    <property type="match status" value="1"/>
</dbReference>
<dbReference type="Pfam" id="PF00032">
    <property type="entry name" value="Cytochrom_B_C"/>
    <property type="match status" value="1"/>
</dbReference>
<dbReference type="Pfam" id="PF00033">
    <property type="entry name" value="Cytochrome_B"/>
    <property type="match status" value="1"/>
</dbReference>
<dbReference type="PIRSF" id="PIRSF038885">
    <property type="entry name" value="COB"/>
    <property type="match status" value="1"/>
</dbReference>
<dbReference type="SUPFAM" id="SSF81648">
    <property type="entry name" value="a domain/subunit of cytochrome bc1 complex (Ubiquinol-cytochrome c reductase)"/>
    <property type="match status" value="1"/>
</dbReference>
<dbReference type="SUPFAM" id="SSF81342">
    <property type="entry name" value="Transmembrane di-heme cytochromes"/>
    <property type="match status" value="1"/>
</dbReference>
<dbReference type="PROSITE" id="PS51003">
    <property type="entry name" value="CYTB_CTER"/>
    <property type="match status" value="1"/>
</dbReference>
<dbReference type="PROSITE" id="PS51002">
    <property type="entry name" value="CYTB_NTER"/>
    <property type="match status" value="1"/>
</dbReference>
<feature type="chain" id="PRO_0000060982" description="Cytochrome b">
    <location>
        <begin position="1"/>
        <end position="381"/>
    </location>
</feature>
<feature type="transmembrane region" description="Helical" evidence="2">
    <location>
        <begin position="34"/>
        <end position="54"/>
    </location>
</feature>
<feature type="transmembrane region" description="Helical" evidence="2">
    <location>
        <begin position="78"/>
        <end position="99"/>
    </location>
</feature>
<feature type="transmembrane region" description="Helical" evidence="2">
    <location>
        <begin position="114"/>
        <end position="134"/>
    </location>
</feature>
<feature type="transmembrane region" description="Helical" evidence="2">
    <location>
        <begin position="179"/>
        <end position="199"/>
    </location>
</feature>
<feature type="transmembrane region" description="Helical" evidence="2">
    <location>
        <begin position="227"/>
        <end position="247"/>
    </location>
</feature>
<feature type="transmembrane region" description="Helical" evidence="2">
    <location>
        <begin position="289"/>
        <end position="309"/>
    </location>
</feature>
<feature type="transmembrane region" description="Helical" evidence="2">
    <location>
        <begin position="321"/>
        <end position="341"/>
    </location>
</feature>
<feature type="transmembrane region" description="Helical" evidence="2">
    <location>
        <begin position="348"/>
        <end position="368"/>
    </location>
</feature>
<feature type="binding site" description="axial binding residue" evidence="2">
    <location>
        <position position="84"/>
    </location>
    <ligand>
        <name>heme b</name>
        <dbReference type="ChEBI" id="CHEBI:60344"/>
        <label>b562</label>
    </ligand>
    <ligandPart>
        <name>Fe</name>
        <dbReference type="ChEBI" id="CHEBI:18248"/>
    </ligandPart>
</feature>
<feature type="binding site" description="axial binding residue" evidence="2">
    <location>
        <position position="98"/>
    </location>
    <ligand>
        <name>heme b</name>
        <dbReference type="ChEBI" id="CHEBI:60344"/>
        <label>b566</label>
    </ligand>
    <ligandPart>
        <name>Fe</name>
        <dbReference type="ChEBI" id="CHEBI:18248"/>
    </ligandPart>
</feature>
<feature type="binding site" description="axial binding residue" evidence="2">
    <location>
        <position position="183"/>
    </location>
    <ligand>
        <name>heme b</name>
        <dbReference type="ChEBI" id="CHEBI:60344"/>
        <label>b562</label>
    </ligand>
    <ligandPart>
        <name>Fe</name>
        <dbReference type="ChEBI" id="CHEBI:18248"/>
    </ligandPart>
</feature>
<feature type="binding site" description="axial binding residue" evidence="2">
    <location>
        <position position="197"/>
    </location>
    <ligand>
        <name>heme b</name>
        <dbReference type="ChEBI" id="CHEBI:60344"/>
        <label>b566</label>
    </ligand>
    <ligandPart>
        <name>Fe</name>
        <dbReference type="ChEBI" id="CHEBI:18248"/>
    </ligandPart>
</feature>
<feature type="binding site" evidence="2">
    <location>
        <position position="202"/>
    </location>
    <ligand>
        <name>a ubiquinone</name>
        <dbReference type="ChEBI" id="CHEBI:16389"/>
    </ligand>
</feature>
<sequence length="381" mass="43234">MAINIRKTHPLLKIINHTLIDLPAPSNISLWWNFGSLLGLCLIIQILTGLFLAMHYTADISMAFSSVVHICRDVNYGWLIRNIHANGASLFFICIYLHIARGLYYGSYLYKETWNIGVILLFLLMATAFVGYVLPWGQMSFWGATVITNLLSAFPYVGNTLVQWIWGGFSVDNATLTRFFAFHFLLPFLILALTIIHLLFLHETGSNNPLGINSDMDKISFHPYMSYKDILGFFAMIFFLAVLTLFIPNLLGDAENFIPANPLVTPPHIKPEWYLLFAYAIFRSIPNKLGGVLALLFSILILMLVPLLQTSKQRSTIFRPMTQILFWFLVANSIILTWIGGQPVEQPFIMVGQIASISYFSMFLIIIPFASWCENKILSLN</sequence>
<reference key="1">
    <citation type="journal article" date="1992" name="Nature">
        <title>Rates of mitochondrial DNA evolution in sharks are slow compared with mammals.</title>
        <authorList>
            <person name="Martin A.P."/>
            <person name="Naylor G.J.P."/>
            <person name="Palumbi S.R."/>
        </authorList>
    </citation>
    <scope>NUCLEOTIDE SEQUENCE [GENOMIC DNA]</scope>
</reference>
<comment type="function">
    <text evidence="2">Component of the ubiquinol-cytochrome c reductase complex (complex III or cytochrome b-c1 complex) that is part of the mitochondrial respiratory chain. The b-c1 complex mediates electron transfer from ubiquinol to cytochrome c. Contributes to the generation of a proton gradient across the mitochondrial membrane that is then used for ATP synthesis.</text>
</comment>
<comment type="cofactor">
    <cofactor evidence="2">
        <name>heme b</name>
        <dbReference type="ChEBI" id="CHEBI:60344"/>
    </cofactor>
    <text evidence="2">Binds 2 heme b groups non-covalently.</text>
</comment>
<comment type="subunit">
    <text evidence="2">The cytochrome bc1 complex contains 3 respiratory subunits (MT-CYB, CYC1 and UQCRFS1), 2 core proteins (UQCRC1 and UQCRC2) and probably 6 low-molecular weight proteins.</text>
</comment>
<comment type="subcellular location">
    <subcellularLocation>
        <location evidence="2">Mitochondrion inner membrane</location>
        <topology evidence="2">Multi-pass membrane protein</topology>
    </subcellularLocation>
</comment>
<comment type="miscellaneous">
    <text evidence="1">Heme 1 (or BL or b562) is low-potential and absorbs at about 562 nm, and heme 2 (or BH or b566) is high-potential and absorbs at about 566 nm.</text>
</comment>
<comment type="similarity">
    <text evidence="3 4">Belongs to the cytochrome b family.</text>
</comment>
<comment type="caution">
    <text evidence="2">The full-length protein contains only eight transmembrane helices, not nine as predicted by bioinformatics tools.</text>
</comment>
<organism>
    <name type="scientific">Galeocerdo cuvier</name>
    <name type="common">Tiger shark</name>
    <name type="synonym">Squalus cuvier</name>
    <dbReference type="NCBI Taxonomy" id="7819"/>
    <lineage>
        <taxon>Eukaryota</taxon>
        <taxon>Metazoa</taxon>
        <taxon>Chordata</taxon>
        <taxon>Craniata</taxon>
        <taxon>Vertebrata</taxon>
        <taxon>Chondrichthyes</taxon>
        <taxon>Elasmobranchii</taxon>
        <taxon>Galeomorphii</taxon>
        <taxon>Galeoidea</taxon>
        <taxon>Carcharhiniformes</taxon>
        <taxon>Carcharhinidae</taxon>
        <taxon>Galeocerdo</taxon>
    </lineage>
</organism>
<geneLocation type="mitochondrion"/>
<accession>P34868</accession>
<evidence type="ECO:0000250" key="1"/>
<evidence type="ECO:0000250" key="2">
    <source>
        <dbReference type="UniProtKB" id="P00157"/>
    </source>
</evidence>
<evidence type="ECO:0000255" key="3">
    <source>
        <dbReference type="PROSITE-ProRule" id="PRU00967"/>
    </source>
</evidence>
<evidence type="ECO:0000255" key="4">
    <source>
        <dbReference type="PROSITE-ProRule" id="PRU00968"/>
    </source>
</evidence>
<proteinExistence type="inferred from homology"/>
<protein>
    <recommendedName>
        <fullName>Cytochrome b</fullName>
    </recommendedName>
    <alternativeName>
        <fullName>Complex III subunit 3</fullName>
    </alternativeName>
    <alternativeName>
        <fullName>Complex III subunit III</fullName>
    </alternativeName>
    <alternativeName>
        <fullName>Cytochrome b-c1 complex subunit 3</fullName>
    </alternativeName>
    <alternativeName>
        <fullName>Ubiquinol-cytochrome-c reductase complex cytochrome b subunit</fullName>
    </alternativeName>
</protein>